<reference key="1">
    <citation type="journal article" date="2006" name="Proc. Natl. Acad. Sci. U.S.A.">
        <title>Comparative genomics of the lactic acid bacteria.</title>
        <authorList>
            <person name="Makarova K.S."/>
            <person name="Slesarev A."/>
            <person name="Wolf Y.I."/>
            <person name="Sorokin A."/>
            <person name="Mirkin B."/>
            <person name="Koonin E.V."/>
            <person name="Pavlov A."/>
            <person name="Pavlova N."/>
            <person name="Karamychev V."/>
            <person name="Polouchine N."/>
            <person name="Shakhova V."/>
            <person name="Grigoriev I."/>
            <person name="Lou Y."/>
            <person name="Rohksar D."/>
            <person name="Lucas S."/>
            <person name="Huang K."/>
            <person name="Goodstein D.M."/>
            <person name="Hawkins T."/>
            <person name="Plengvidhya V."/>
            <person name="Welker D."/>
            <person name="Hughes J."/>
            <person name="Goh Y."/>
            <person name="Benson A."/>
            <person name="Baldwin K."/>
            <person name="Lee J.-H."/>
            <person name="Diaz-Muniz I."/>
            <person name="Dosti B."/>
            <person name="Smeianov V."/>
            <person name="Wechter W."/>
            <person name="Barabote R."/>
            <person name="Lorca G."/>
            <person name="Altermann E."/>
            <person name="Barrangou R."/>
            <person name="Ganesan B."/>
            <person name="Xie Y."/>
            <person name="Rawsthorne H."/>
            <person name="Tamir D."/>
            <person name="Parker C."/>
            <person name="Breidt F."/>
            <person name="Broadbent J.R."/>
            <person name="Hutkins R."/>
            <person name="O'Sullivan D."/>
            <person name="Steele J."/>
            <person name="Unlu G."/>
            <person name="Saier M.H. Jr."/>
            <person name="Klaenhammer T."/>
            <person name="Richardson P."/>
            <person name="Kozyavkin S."/>
            <person name="Weimer B.C."/>
            <person name="Mills D.A."/>
        </authorList>
    </citation>
    <scope>NUCLEOTIDE SEQUENCE [LARGE SCALE GENOMIC DNA]</scope>
    <source>
        <strain>ATCC 367 / BCRC 12310 / CIP 105137 / JCM 1170 / LMG 11437 / NCIMB 947 / NCTC 947</strain>
    </source>
</reference>
<accession>Q03RM9</accession>
<proteinExistence type="inferred from homology"/>
<keyword id="KW-0030">Aminoacyl-tRNA synthetase</keyword>
<keyword id="KW-0067">ATP-binding</keyword>
<keyword id="KW-0963">Cytoplasm</keyword>
<keyword id="KW-0436">Ligase</keyword>
<keyword id="KW-0460">Magnesium</keyword>
<keyword id="KW-0479">Metal-binding</keyword>
<keyword id="KW-0547">Nucleotide-binding</keyword>
<keyword id="KW-0648">Protein biosynthesis</keyword>
<keyword id="KW-1185">Reference proteome</keyword>
<name>SYFA_LEVBA</name>
<sequence>MSLRDKLNELHERGLAEIQKSTDLKDVNQVRVSLLGKKGPITEVLRGMRDLDAEERPKVGAFANEIRDDLTAALTKRREELENAVLNARLAKEAIDVTLPGTPVAKGEPHVIQQIIDQIEDLFLGMGYQVLSGPEVEEDKYNFEMMNLPKNHPARDMQDTFYITKEILMRTQTSPMQARTLEKHDFSQGPLKMISPGVVYRRDTDDPTHSHQFHQVEGLVIDKHITMADLKGTLQVLAHELFGDKFDVRLRPSYFPFTEPSVETDITCFNCGGKGCNVCKNTGWIEVLGAGMVHPNVLKMAGVDPDVYGGFAFGVGPDRFAMLKYGVDDIRNFYLNDVRFLTQFTKKG</sequence>
<dbReference type="EC" id="6.1.1.20" evidence="1"/>
<dbReference type="EMBL" id="CP000416">
    <property type="protein sequence ID" value="ABJ64143.1"/>
    <property type="molecule type" value="Genomic_DNA"/>
</dbReference>
<dbReference type="RefSeq" id="WP_011667733.1">
    <property type="nucleotide sequence ID" value="NC_008497.1"/>
</dbReference>
<dbReference type="SMR" id="Q03RM9"/>
<dbReference type="STRING" id="387344.LVIS_1010"/>
<dbReference type="KEGG" id="lbr:LVIS_1010"/>
<dbReference type="PATRIC" id="fig|387344.15.peg.986"/>
<dbReference type="eggNOG" id="COG0016">
    <property type="taxonomic scope" value="Bacteria"/>
</dbReference>
<dbReference type="HOGENOM" id="CLU_025086_0_1_9"/>
<dbReference type="Proteomes" id="UP000001652">
    <property type="component" value="Chromosome"/>
</dbReference>
<dbReference type="GO" id="GO:0005737">
    <property type="term" value="C:cytoplasm"/>
    <property type="evidence" value="ECO:0007669"/>
    <property type="project" value="UniProtKB-SubCell"/>
</dbReference>
<dbReference type="GO" id="GO:0005524">
    <property type="term" value="F:ATP binding"/>
    <property type="evidence" value="ECO:0007669"/>
    <property type="project" value="UniProtKB-UniRule"/>
</dbReference>
<dbReference type="GO" id="GO:0140096">
    <property type="term" value="F:catalytic activity, acting on a protein"/>
    <property type="evidence" value="ECO:0007669"/>
    <property type="project" value="UniProtKB-ARBA"/>
</dbReference>
<dbReference type="GO" id="GO:0000287">
    <property type="term" value="F:magnesium ion binding"/>
    <property type="evidence" value="ECO:0007669"/>
    <property type="project" value="UniProtKB-UniRule"/>
</dbReference>
<dbReference type="GO" id="GO:0004826">
    <property type="term" value="F:phenylalanine-tRNA ligase activity"/>
    <property type="evidence" value="ECO:0007669"/>
    <property type="project" value="UniProtKB-UniRule"/>
</dbReference>
<dbReference type="GO" id="GO:0016740">
    <property type="term" value="F:transferase activity"/>
    <property type="evidence" value="ECO:0007669"/>
    <property type="project" value="UniProtKB-ARBA"/>
</dbReference>
<dbReference type="GO" id="GO:0000049">
    <property type="term" value="F:tRNA binding"/>
    <property type="evidence" value="ECO:0007669"/>
    <property type="project" value="InterPro"/>
</dbReference>
<dbReference type="GO" id="GO:0006432">
    <property type="term" value="P:phenylalanyl-tRNA aminoacylation"/>
    <property type="evidence" value="ECO:0007669"/>
    <property type="project" value="UniProtKB-UniRule"/>
</dbReference>
<dbReference type="CDD" id="cd00496">
    <property type="entry name" value="PheRS_alpha_core"/>
    <property type="match status" value="1"/>
</dbReference>
<dbReference type="FunFam" id="3.30.930.10:FF:000003">
    <property type="entry name" value="Phenylalanine--tRNA ligase alpha subunit"/>
    <property type="match status" value="1"/>
</dbReference>
<dbReference type="Gene3D" id="3.30.930.10">
    <property type="entry name" value="Bira Bifunctional Protein, Domain 2"/>
    <property type="match status" value="1"/>
</dbReference>
<dbReference type="HAMAP" id="MF_00281">
    <property type="entry name" value="Phe_tRNA_synth_alpha1"/>
    <property type="match status" value="1"/>
</dbReference>
<dbReference type="InterPro" id="IPR006195">
    <property type="entry name" value="aa-tRNA-synth_II"/>
</dbReference>
<dbReference type="InterPro" id="IPR045864">
    <property type="entry name" value="aa-tRNA-synth_II/BPL/LPL"/>
</dbReference>
<dbReference type="InterPro" id="IPR004529">
    <property type="entry name" value="Phe-tRNA-synth_IIc_asu"/>
</dbReference>
<dbReference type="InterPro" id="IPR004188">
    <property type="entry name" value="Phe-tRNA_ligase_II_N"/>
</dbReference>
<dbReference type="InterPro" id="IPR022911">
    <property type="entry name" value="Phe_tRNA_ligase_alpha1_bac"/>
</dbReference>
<dbReference type="InterPro" id="IPR002319">
    <property type="entry name" value="Phenylalanyl-tRNA_Synthase"/>
</dbReference>
<dbReference type="InterPro" id="IPR010978">
    <property type="entry name" value="tRNA-bd_arm"/>
</dbReference>
<dbReference type="NCBIfam" id="TIGR00468">
    <property type="entry name" value="pheS"/>
    <property type="match status" value="1"/>
</dbReference>
<dbReference type="PANTHER" id="PTHR11538:SF41">
    <property type="entry name" value="PHENYLALANINE--TRNA LIGASE, MITOCHONDRIAL"/>
    <property type="match status" value="1"/>
</dbReference>
<dbReference type="PANTHER" id="PTHR11538">
    <property type="entry name" value="PHENYLALANYL-TRNA SYNTHETASE"/>
    <property type="match status" value="1"/>
</dbReference>
<dbReference type="Pfam" id="PF02912">
    <property type="entry name" value="Phe_tRNA-synt_N"/>
    <property type="match status" value="1"/>
</dbReference>
<dbReference type="Pfam" id="PF01409">
    <property type="entry name" value="tRNA-synt_2d"/>
    <property type="match status" value="1"/>
</dbReference>
<dbReference type="SUPFAM" id="SSF55681">
    <property type="entry name" value="Class II aaRS and biotin synthetases"/>
    <property type="match status" value="1"/>
</dbReference>
<dbReference type="SUPFAM" id="SSF46589">
    <property type="entry name" value="tRNA-binding arm"/>
    <property type="match status" value="1"/>
</dbReference>
<dbReference type="PROSITE" id="PS50862">
    <property type="entry name" value="AA_TRNA_LIGASE_II"/>
    <property type="match status" value="1"/>
</dbReference>
<organism>
    <name type="scientific">Levilactobacillus brevis (strain ATCC 367 / BCRC 12310 / CIP 105137 / JCM 1170 / LMG 11437 / NCIMB 947 / NCTC 947)</name>
    <name type="common">Lactobacillus brevis</name>
    <dbReference type="NCBI Taxonomy" id="387344"/>
    <lineage>
        <taxon>Bacteria</taxon>
        <taxon>Bacillati</taxon>
        <taxon>Bacillota</taxon>
        <taxon>Bacilli</taxon>
        <taxon>Lactobacillales</taxon>
        <taxon>Lactobacillaceae</taxon>
        <taxon>Levilactobacillus</taxon>
    </lineage>
</organism>
<evidence type="ECO:0000255" key="1">
    <source>
        <dbReference type="HAMAP-Rule" id="MF_00281"/>
    </source>
</evidence>
<feature type="chain" id="PRO_1000006846" description="Phenylalanine--tRNA ligase alpha subunit">
    <location>
        <begin position="1"/>
        <end position="348"/>
    </location>
</feature>
<feature type="binding site" evidence="1">
    <location>
        <position position="259"/>
    </location>
    <ligand>
        <name>Mg(2+)</name>
        <dbReference type="ChEBI" id="CHEBI:18420"/>
        <note>shared with beta subunit</note>
    </ligand>
</feature>
<comment type="catalytic activity">
    <reaction evidence="1">
        <text>tRNA(Phe) + L-phenylalanine + ATP = L-phenylalanyl-tRNA(Phe) + AMP + diphosphate + H(+)</text>
        <dbReference type="Rhea" id="RHEA:19413"/>
        <dbReference type="Rhea" id="RHEA-COMP:9668"/>
        <dbReference type="Rhea" id="RHEA-COMP:9699"/>
        <dbReference type="ChEBI" id="CHEBI:15378"/>
        <dbReference type="ChEBI" id="CHEBI:30616"/>
        <dbReference type="ChEBI" id="CHEBI:33019"/>
        <dbReference type="ChEBI" id="CHEBI:58095"/>
        <dbReference type="ChEBI" id="CHEBI:78442"/>
        <dbReference type="ChEBI" id="CHEBI:78531"/>
        <dbReference type="ChEBI" id="CHEBI:456215"/>
        <dbReference type="EC" id="6.1.1.20"/>
    </reaction>
</comment>
<comment type="cofactor">
    <cofactor evidence="1">
        <name>Mg(2+)</name>
        <dbReference type="ChEBI" id="CHEBI:18420"/>
    </cofactor>
    <text evidence="1">Binds 2 magnesium ions per tetramer.</text>
</comment>
<comment type="subunit">
    <text evidence="1">Tetramer of two alpha and two beta subunits.</text>
</comment>
<comment type="subcellular location">
    <subcellularLocation>
        <location evidence="1">Cytoplasm</location>
    </subcellularLocation>
</comment>
<comment type="similarity">
    <text evidence="1">Belongs to the class-II aminoacyl-tRNA synthetase family. Phe-tRNA synthetase alpha subunit type 1 subfamily.</text>
</comment>
<protein>
    <recommendedName>
        <fullName evidence="1">Phenylalanine--tRNA ligase alpha subunit</fullName>
        <ecNumber evidence="1">6.1.1.20</ecNumber>
    </recommendedName>
    <alternativeName>
        <fullName evidence="1">Phenylalanyl-tRNA synthetase alpha subunit</fullName>
        <shortName evidence="1">PheRS</shortName>
    </alternativeName>
</protein>
<gene>
    <name evidence="1" type="primary">pheS</name>
    <name type="ordered locus">LVIS_1010</name>
</gene>